<accession>A8LK55</accession>
<protein>
    <recommendedName>
        <fullName evidence="1">Heme A synthase</fullName>
        <shortName evidence="1">HAS</shortName>
        <ecNumber evidence="1">1.17.99.9</ecNumber>
    </recommendedName>
    <alternativeName>
        <fullName evidence="1">Cytochrome aa3-controlling protein</fullName>
    </alternativeName>
</protein>
<reference key="1">
    <citation type="journal article" date="2010" name="ISME J.">
        <title>The complete genome sequence of the algal symbiont Dinoroseobacter shibae: a hitchhiker's guide to life in the sea.</title>
        <authorList>
            <person name="Wagner-Dobler I."/>
            <person name="Ballhausen B."/>
            <person name="Berger M."/>
            <person name="Brinkhoff T."/>
            <person name="Buchholz I."/>
            <person name="Bunk B."/>
            <person name="Cypionka H."/>
            <person name="Daniel R."/>
            <person name="Drepper T."/>
            <person name="Gerdts G."/>
            <person name="Hahnke S."/>
            <person name="Han C."/>
            <person name="Jahn D."/>
            <person name="Kalhoefer D."/>
            <person name="Kiss H."/>
            <person name="Klenk H.P."/>
            <person name="Kyrpides N."/>
            <person name="Liebl W."/>
            <person name="Liesegang H."/>
            <person name="Meincke L."/>
            <person name="Pati A."/>
            <person name="Petersen J."/>
            <person name="Piekarski T."/>
            <person name="Pommerenke C."/>
            <person name="Pradella S."/>
            <person name="Pukall R."/>
            <person name="Rabus R."/>
            <person name="Stackebrandt E."/>
            <person name="Thole S."/>
            <person name="Thompson L."/>
            <person name="Tielen P."/>
            <person name="Tomasch J."/>
            <person name="von Jan M."/>
            <person name="Wanphrut N."/>
            <person name="Wichels A."/>
            <person name="Zech H."/>
            <person name="Simon M."/>
        </authorList>
    </citation>
    <scope>NUCLEOTIDE SEQUENCE [LARGE SCALE GENOMIC DNA]</scope>
    <source>
        <strain>DSM 16493 / NCIMB 14021 / DFL 12</strain>
    </source>
</reference>
<comment type="function">
    <text evidence="1">Catalyzes the conversion of heme O to heme A by two successive hydroxylations of the methyl group at C8. The first hydroxylation forms heme I, the second hydroxylation results in an unstable dihydroxymethyl group, which spontaneously dehydrates, resulting in the formyl group of heme A.</text>
</comment>
<comment type="catalytic activity">
    <reaction evidence="1">
        <text>Fe(II)-heme o + 2 A + H2O = Fe(II)-heme a + 2 AH2</text>
        <dbReference type="Rhea" id="RHEA:63388"/>
        <dbReference type="ChEBI" id="CHEBI:13193"/>
        <dbReference type="ChEBI" id="CHEBI:15377"/>
        <dbReference type="ChEBI" id="CHEBI:17499"/>
        <dbReference type="ChEBI" id="CHEBI:60530"/>
        <dbReference type="ChEBI" id="CHEBI:61715"/>
        <dbReference type="EC" id="1.17.99.9"/>
    </reaction>
    <physiologicalReaction direction="left-to-right" evidence="1">
        <dbReference type="Rhea" id="RHEA:63389"/>
    </physiologicalReaction>
</comment>
<comment type="cofactor">
    <cofactor evidence="1">
        <name>heme b</name>
        <dbReference type="ChEBI" id="CHEBI:60344"/>
    </cofactor>
</comment>
<comment type="pathway">
    <text evidence="1">Porphyrin-containing compound metabolism; heme A biosynthesis; heme A from heme O: step 1/1.</text>
</comment>
<comment type="subunit">
    <text evidence="1">Interacts with CtaB.</text>
</comment>
<comment type="subcellular location">
    <subcellularLocation>
        <location evidence="1">Cell membrane</location>
        <topology evidence="1">Multi-pass membrane protein</topology>
    </subcellularLocation>
</comment>
<comment type="similarity">
    <text evidence="1">Belongs to the COX15/CtaA family. Type 2 subfamily.</text>
</comment>
<proteinExistence type="inferred from homology"/>
<sequence>MSKKRSIFEEVSEAQPKAQPVQPGVIDRAARTGARGAVRVWLMMLFGLVVIMIAVGGLTRLTDSGLSITEWAPIAGAIPPLSAEDWAREFDLYRAIPEYQLQNKGMTLAEFQFIYWWEWGHRQLGRVIGLVWALGFFGFLVTRKIPPGWTGRLFLLGVLGGLQGAIGWWMVASGLTGTMLDVASYRLATHLGLAFFILGLIAWYIMVLGRPERDLLQARRSGEAGLVTGANWLMGLAAVQILLGALVAGIDAGRTYTDWPLMAGGFLPLNMWELEPIWRNFFEDPGLVQFNHRMVGYLLLLVGLYVWWRSRRSAHVTTKRAFDWVAVILFGQMVLGIVTVLNAAPWTWAIAHQFGAVVTICLILRARFRARYPVATSLRGAVA</sequence>
<keyword id="KW-1003">Cell membrane</keyword>
<keyword id="KW-0350">Heme biosynthesis</keyword>
<keyword id="KW-0408">Iron</keyword>
<keyword id="KW-0472">Membrane</keyword>
<keyword id="KW-0479">Metal-binding</keyword>
<keyword id="KW-0560">Oxidoreductase</keyword>
<keyword id="KW-1185">Reference proteome</keyword>
<keyword id="KW-0812">Transmembrane</keyword>
<keyword id="KW-1133">Transmembrane helix</keyword>
<organism>
    <name type="scientific">Dinoroseobacter shibae (strain DSM 16493 / NCIMB 14021 / DFL 12)</name>
    <dbReference type="NCBI Taxonomy" id="398580"/>
    <lineage>
        <taxon>Bacteria</taxon>
        <taxon>Pseudomonadati</taxon>
        <taxon>Pseudomonadota</taxon>
        <taxon>Alphaproteobacteria</taxon>
        <taxon>Rhodobacterales</taxon>
        <taxon>Roseobacteraceae</taxon>
        <taxon>Dinoroseobacter</taxon>
    </lineage>
</organism>
<feature type="chain" id="PRO_0000349029" description="Heme A synthase">
    <location>
        <begin position="1"/>
        <end position="383"/>
    </location>
</feature>
<feature type="transmembrane region" description="Helical" evidence="1">
    <location>
        <begin position="38"/>
        <end position="58"/>
    </location>
</feature>
<feature type="transmembrane region" description="Helical" evidence="1">
    <location>
        <begin position="127"/>
        <end position="147"/>
    </location>
</feature>
<feature type="transmembrane region" description="Helical" evidence="1">
    <location>
        <begin position="153"/>
        <end position="173"/>
    </location>
</feature>
<feature type="transmembrane region" description="Helical" evidence="1">
    <location>
        <begin position="187"/>
        <end position="207"/>
    </location>
</feature>
<feature type="transmembrane region" description="Helical" evidence="1">
    <location>
        <begin position="230"/>
        <end position="250"/>
    </location>
</feature>
<feature type="transmembrane region" description="Helical" evidence="1">
    <location>
        <begin position="287"/>
        <end position="307"/>
    </location>
</feature>
<feature type="transmembrane region" description="Helical" evidence="1">
    <location>
        <begin position="321"/>
        <end position="341"/>
    </location>
</feature>
<feature type="transmembrane region" description="Helical" evidence="1">
    <location>
        <begin position="344"/>
        <end position="364"/>
    </location>
</feature>
<feature type="binding site" description="axial binding residue" evidence="1">
    <location>
        <position position="292"/>
    </location>
    <ligand>
        <name>heme</name>
        <dbReference type="ChEBI" id="CHEBI:30413"/>
    </ligand>
    <ligandPart>
        <name>Fe</name>
        <dbReference type="ChEBI" id="CHEBI:18248"/>
    </ligandPart>
</feature>
<feature type="binding site" description="axial binding residue" evidence="1">
    <location>
        <position position="352"/>
    </location>
    <ligand>
        <name>heme</name>
        <dbReference type="ChEBI" id="CHEBI:30413"/>
    </ligand>
    <ligandPart>
        <name>Fe</name>
        <dbReference type="ChEBI" id="CHEBI:18248"/>
    </ligandPart>
</feature>
<dbReference type="EC" id="1.17.99.9" evidence="1"/>
<dbReference type="EMBL" id="CP000830">
    <property type="protein sequence ID" value="ABV93254.1"/>
    <property type="molecule type" value="Genomic_DNA"/>
</dbReference>
<dbReference type="RefSeq" id="WP_012178184.1">
    <property type="nucleotide sequence ID" value="NC_009952.1"/>
</dbReference>
<dbReference type="SMR" id="A8LK55"/>
<dbReference type="STRING" id="398580.Dshi_1512"/>
<dbReference type="KEGG" id="dsh:Dshi_1512"/>
<dbReference type="eggNOG" id="COG1612">
    <property type="taxonomic scope" value="Bacteria"/>
</dbReference>
<dbReference type="HOGENOM" id="CLU_017627_0_0_5"/>
<dbReference type="OrthoDB" id="9793156at2"/>
<dbReference type="UniPathway" id="UPA00269">
    <property type="reaction ID" value="UER00713"/>
</dbReference>
<dbReference type="Proteomes" id="UP000006833">
    <property type="component" value="Chromosome"/>
</dbReference>
<dbReference type="GO" id="GO:0005886">
    <property type="term" value="C:plasma membrane"/>
    <property type="evidence" value="ECO:0007669"/>
    <property type="project" value="UniProtKB-SubCell"/>
</dbReference>
<dbReference type="GO" id="GO:0046872">
    <property type="term" value="F:metal ion binding"/>
    <property type="evidence" value="ECO:0007669"/>
    <property type="project" value="UniProtKB-KW"/>
</dbReference>
<dbReference type="GO" id="GO:0016653">
    <property type="term" value="F:oxidoreductase activity, acting on NAD(P)H, heme protein as acceptor"/>
    <property type="evidence" value="ECO:0007669"/>
    <property type="project" value="InterPro"/>
</dbReference>
<dbReference type="GO" id="GO:0006784">
    <property type="term" value="P:heme A biosynthetic process"/>
    <property type="evidence" value="ECO:0007669"/>
    <property type="project" value="UniProtKB-UniRule"/>
</dbReference>
<dbReference type="HAMAP" id="MF_01665">
    <property type="entry name" value="HemeA_synth_type2"/>
    <property type="match status" value="1"/>
</dbReference>
<dbReference type="InterPro" id="IPR003780">
    <property type="entry name" value="COX15/CtaA_fam"/>
</dbReference>
<dbReference type="InterPro" id="IPR054616">
    <property type="entry name" value="HemA_synt_rhodobact"/>
</dbReference>
<dbReference type="InterPro" id="IPR023754">
    <property type="entry name" value="HemeA_Synthase_type2"/>
</dbReference>
<dbReference type="NCBIfam" id="NF045570">
    <property type="entry name" value="HemSynCtaAAlphapr"/>
    <property type="match status" value="1"/>
</dbReference>
<dbReference type="PANTHER" id="PTHR23289">
    <property type="entry name" value="CYTOCHROME C OXIDASE ASSEMBLY PROTEIN COX15"/>
    <property type="match status" value="1"/>
</dbReference>
<dbReference type="PANTHER" id="PTHR23289:SF2">
    <property type="entry name" value="CYTOCHROME C OXIDASE ASSEMBLY PROTEIN COX15 HOMOLOG"/>
    <property type="match status" value="1"/>
</dbReference>
<dbReference type="Pfam" id="PF02628">
    <property type="entry name" value="COX15-CtaA"/>
    <property type="match status" value="1"/>
</dbReference>
<evidence type="ECO:0000255" key="1">
    <source>
        <dbReference type="HAMAP-Rule" id="MF_01665"/>
    </source>
</evidence>
<gene>
    <name evidence="1" type="primary">ctaA</name>
    <name type="ordered locus">Dshi_1512</name>
</gene>
<name>CTAA_DINSH</name>